<gene>
    <name evidence="1" type="primary">rplK</name>
    <name type="ordered locus">Fjoh_1939</name>
</gene>
<protein>
    <recommendedName>
        <fullName evidence="1">Large ribosomal subunit protein uL11</fullName>
    </recommendedName>
    <alternativeName>
        <fullName evidence="2">50S ribosomal protein L11</fullName>
    </alternativeName>
</protein>
<proteinExistence type="inferred from homology"/>
<comment type="function">
    <text evidence="1">Forms part of the ribosomal stalk which helps the ribosome interact with GTP-bound translation factors.</text>
</comment>
<comment type="subunit">
    <text evidence="1">Part of the ribosomal stalk of the 50S ribosomal subunit. Interacts with L10 and the large rRNA to form the base of the stalk. L10 forms an elongated spine to which L12 dimers bind in a sequential fashion forming a multimeric L10(L12)X complex.</text>
</comment>
<comment type="PTM">
    <text evidence="1">One or more lysine residues are methylated.</text>
</comment>
<comment type="similarity">
    <text evidence="1">Belongs to the universal ribosomal protein uL11 family.</text>
</comment>
<evidence type="ECO:0000255" key="1">
    <source>
        <dbReference type="HAMAP-Rule" id="MF_00736"/>
    </source>
</evidence>
<evidence type="ECO:0000305" key="2"/>
<reference key="1">
    <citation type="journal article" date="2009" name="Appl. Environ. Microbiol.">
        <title>Novel features of the polysaccharide-digesting gliding bacterium Flavobacterium johnsoniae as revealed by genome sequence analysis.</title>
        <authorList>
            <person name="McBride M.J."/>
            <person name="Xie G."/>
            <person name="Martens E.C."/>
            <person name="Lapidus A."/>
            <person name="Henrissat B."/>
            <person name="Rhodes R.G."/>
            <person name="Goltsman E."/>
            <person name="Wang W."/>
            <person name="Xu J."/>
            <person name="Hunnicutt D.W."/>
            <person name="Staroscik A.M."/>
            <person name="Hoover T.R."/>
            <person name="Cheng Y.Q."/>
            <person name="Stein J.L."/>
        </authorList>
    </citation>
    <scope>NUCLEOTIDE SEQUENCE [LARGE SCALE GENOMIC DNA]</scope>
    <source>
        <strain>ATCC 17061 / DSM 2064 / JCM 8514 / BCRC 14874 / CCUG 350202 / NBRC 14942 / NCIMB 11054 / UW101</strain>
    </source>
</reference>
<feature type="chain" id="PRO_1000083382" description="Large ribosomal subunit protein uL11">
    <location>
        <begin position="1"/>
        <end position="145"/>
    </location>
</feature>
<keyword id="KW-0488">Methylation</keyword>
<keyword id="KW-0687">Ribonucleoprotein</keyword>
<keyword id="KW-0689">Ribosomal protein</keyword>
<keyword id="KW-0694">RNA-binding</keyword>
<keyword id="KW-0699">rRNA-binding</keyword>
<organism>
    <name type="scientific">Flavobacterium johnsoniae (strain ATCC 17061 / DSM 2064 / JCM 8514 / BCRC 14874 / CCUG 350202 / NBRC 14942 / NCIMB 11054 / UW101)</name>
    <name type="common">Cytophaga johnsonae</name>
    <dbReference type="NCBI Taxonomy" id="376686"/>
    <lineage>
        <taxon>Bacteria</taxon>
        <taxon>Pseudomonadati</taxon>
        <taxon>Bacteroidota</taxon>
        <taxon>Flavobacteriia</taxon>
        <taxon>Flavobacteriales</taxon>
        <taxon>Flavobacteriaceae</taxon>
        <taxon>Flavobacterium</taxon>
    </lineage>
</organism>
<sequence>MAKEISKVVKLQVKGGAANPSPPVGPALGAAGVNIMEFCKQFNARTQDKPGKICPVQITVYKDKSFDFVVKTPPAAVQLMEAAKLKSGSGEPNRKKVASVTWEQIRTIAEDKMPDLNAFTIEKAMSMVAGTARSMGITVSGDAPF</sequence>
<accession>A5FIK2</accession>
<dbReference type="EMBL" id="CP000685">
    <property type="protein sequence ID" value="ABQ04971.1"/>
    <property type="molecule type" value="Genomic_DNA"/>
</dbReference>
<dbReference type="RefSeq" id="WP_008466923.1">
    <property type="nucleotide sequence ID" value="NZ_MUGZ01000012.1"/>
</dbReference>
<dbReference type="SMR" id="A5FIK2"/>
<dbReference type="STRING" id="376686.Fjoh_1939"/>
<dbReference type="KEGG" id="fjo:Fjoh_1939"/>
<dbReference type="eggNOG" id="COG0080">
    <property type="taxonomic scope" value="Bacteria"/>
</dbReference>
<dbReference type="HOGENOM" id="CLU_074237_2_1_10"/>
<dbReference type="OrthoDB" id="9802408at2"/>
<dbReference type="Proteomes" id="UP000006694">
    <property type="component" value="Chromosome"/>
</dbReference>
<dbReference type="GO" id="GO:0022625">
    <property type="term" value="C:cytosolic large ribosomal subunit"/>
    <property type="evidence" value="ECO:0007669"/>
    <property type="project" value="TreeGrafter"/>
</dbReference>
<dbReference type="GO" id="GO:0070180">
    <property type="term" value="F:large ribosomal subunit rRNA binding"/>
    <property type="evidence" value="ECO:0007669"/>
    <property type="project" value="UniProtKB-UniRule"/>
</dbReference>
<dbReference type="GO" id="GO:0003735">
    <property type="term" value="F:structural constituent of ribosome"/>
    <property type="evidence" value="ECO:0007669"/>
    <property type="project" value="InterPro"/>
</dbReference>
<dbReference type="GO" id="GO:0006412">
    <property type="term" value="P:translation"/>
    <property type="evidence" value="ECO:0007669"/>
    <property type="project" value="UniProtKB-UniRule"/>
</dbReference>
<dbReference type="CDD" id="cd00349">
    <property type="entry name" value="Ribosomal_L11"/>
    <property type="match status" value="1"/>
</dbReference>
<dbReference type="FunFam" id="1.10.10.250:FF:000001">
    <property type="entry name" value="50S ribosomal protein L11"/>
    <property type="match status" value="1"/>
</dbReference>
<dbReference type="FunFam" id="3.30.1550.10:FF:000001">
    <property type="entry name" value="50S ribosomal protein L11"/>
    <property type="match status" value="1"/>
</dbReference>
<dbReference type="Gene3D" id="1.10.10.250">
    <property type="entry name" value="Ribosomal protein L11, C-terminal domain"/>
    <property type="match status" value="1"/>
</dbReference>
<dbReference type="Gene3D" id="3.30.1550.10">
    <property type="entry name" value="Ribosomal protein L11/L12, N-terminal domain"/>
    <property type="match status" value="1"/>
</dbReference>
<dbReference type="HAMAP" id="MF_00736">
    <property type="entry name" value="Ribosomal_uL11"/>
    <property type="match status" value="1"/>
</dbReference>
<dbReference type="InterPro" id="IPR000911">
    <property type="entry name" value="Ribosomal_uL11"/>
</dbReference>
<dbReference type="InterPro" id="IPR006519">
    <property type="entry name" value="Ribosomal_uL11_bac-typ"/>
</dbReference>
<dbReference type="InterPro" id="IPR020783">
    <property type="entry name" value="Ribosomal_uL11_C"/>
</dbReference>
<dbReference type="InterPro" id="IPR036769">
    <property type="entry name" value="Ribosomal_uL11_C_sf"/>
</dbReference>
<dbReference type="InterPro" id="IPR020784">
    <property type="entry name" value="Ribosomal_uL11_N"/>
</dbReference>
<dbReference type="InterPro" id="IPR036796">
    <property type="entry name" value="Ribosomal_uL11_N_sf"/>
</dbReference>
<dbReference type="NCBIfam" id="TIGR01632">
    <property type="entry name" value="L11_bact"/>
    <property type="match status" value="1"/>
</dbReference>
<dbReference type="PANTHER" id="PTHR11661">
    <property type="entry name" value="60S RIBOSOMAL PROTEIN L12"/>
    <property type="match status" value="1"/>
</dbReference>
<dbReference type="PANTHER" id="PTHR11661:SF1">
    <property type="entry name" value="LARGE RIBOSOMAL SUBUNIT PROTEIN UL11M"/>
    <property type="match status" value="1"/>
</dbReference>
<dbReference type="Pfam" id="PF00298">
    <property type="entry name" value="Ribosomal_L11"/>
    <property type="match status" value="1"/>
</dbReference>
<dbReference type="Pfam" id="PF03946">
    <property type="entry name" value="Ribosomal_L11_N"/>
    <property type="match status" value="1"/>
</dbReference>
<dbReference type="SMART" id="SM00649">
    <property type="entry name" value="RL11"/>
    <property type="match status" value="1"/>
</dbReference>
<dbReference type="SUPFAM" id="SSF54747">
    <property type="entry name" value="Ribosomal L11/L12e N-terminal domain"/>
    <property type="match status" value="1"/>
</dbReference>
<dbReference type="SUPFAM" id="SSF46906">
    <property type="entry name" value="Ribosomal protein L11, C-terminal domain"/>
    <property type="match status" value="1"/>
</dbReference>
<name>RL11_FLAJ1</name>